<proteinExistence type="inferred from homology"/>
<keyword id="KW-0963">Cytoplasm</keyword>
<keyword id="KW-0251">Elongation factor</keyword>
<keyword id="KW-0342">GTP-binding</keyword>
<keyword id="KW-0378">Hydrolase</keyword>
<keyword id="KW-0460">Magnesium</keyword>
<keyword id="KW-0479">Metal-binding</keyword>
<keyword id="KW-0547">Nucleotide-binding</keyword>
<keyword id="KW-0648">Protein biosynthesis</keyword>
<reference key="1">
    <citation type="submission" date="1997-06" db="EMBL/GenBank/DDBJ databases">
        <authorList>
            <person name="Weiser J."/>
            <person name="Kormanec J."/>
            <person name="Potuckova L."/>
            <person name="Homerova D."/>
            <person name="Vohradsky J."/>
            <person name="Novotna J."/>
            <person name="Kalachova L."/>
        </authorList>
    </citation>
    <scope>NUCLEOTIDE SEQUENCE [GENOMIC DNA]</scope>
    <source>
        <strain>ATCC 10762 / DSM 40127 / CCM 3239 / JCM 4008 / LMG 5968 / NBRC 12843 / NCIMB 8234 / A-377</strain>
    </source>
</reference>
<gene>
    <name evidence="2" type="primary">tuf1</name>
</gene>
<protein>
    <recommendedName>
        <fullName evidence="2">Elongation factor Tu</fullName>
        <shortName evidence="2">EF-Tu</shortName>
        <ecNumber evidence="2">3.6.5.3</ecNumber>
    </recommendedName>
</protein>
<comment type="function">
    <text evidence="2">GTP hydrolase that promotes the GTP-dependent binding of aminoacyl-tRNA to the A-site of ribosomes during protein biosynthesis.</text>
</comment>
<comment type="catalytic activity">
    <reaction evidence="2">
        <text>GTP + H2O = GDP + phosphate + H(+)</text>
        <dbReference type="Rhea" id="RHEA:19669"/>
        <dbReference type="ChEBI" id="CHEBI:15377"/>
        <dbReference type="ChEBI" id="CHEBI:15378"/>
        <dbReference type="ChEBI" id="CHEBI:37565"/>
        <dbReference type="ChEBI" id="CHEBI:43474"/>
        <dbReference type="ChEBI" id="CHEBI:58189"/>
        <dbReference type="EC" id="3.6.5.3"/>
    </reaction>
    <physiologicalReaction direction="left-to-right" evidence="2">
        <dbReference type="Rhea" id="RHEA:19670"/>
    </physiologicalReaction>
</comment>
<comment type="subunit">
    <text evidence="2">Monomer.</text>
</comment>
<comment type="subcellular location">
    <subcellularLocation>
        <location evidence="2">Cytoplasm</location>
    </subcellularLocation>
</comment>
<comment type="similarity">
    <text evidence="2">Belongs to the TRAFAC class translation factor GTPase superfamily. Classic translation factor GTPase family. EF-Tu/EF-1A subfamily.</text>
</comment>
<evidence type="ECO:0000250" key="1"/>
<evidence type="ECO:0000255" key="2">
    <source>
        <dbReference type="HAMAP-Rule" id="MF_00118"/>
    </source>
</evidence>
<name>EFTU_KITAU</name>
<accession>O33594</accession>
<feature type="chain" id="PRO_0000091399" description="Elongation factor Tu">
    <location>
        <begin position="1"/>
        <end position="397"/>
    </location>
</feature>
<feature type="domain" description="tr-type G">
    <location>
        <begin position="10"/>
        <end position="206"/>
    </location>
</feature>
<feature type="region of interest" description="G1" evidence="1">
    <location>
        <begin position="19"/>
        <end position="26"/>
    </location>
</feature>
<feature type="region of interest" description="G2" evidence="1">
    <location>
        <begin position="62"/>
        <end position="66"/>
    </location>
</feature>
<feature type="region of interest" description="G3" evidence="1">
    <location>
        <begin position="83"/>
        <end position="86"/>
    </location>
</feature>
<feature type="region of interest" description="G4" evidence="1">
    <location>
        <begin position="138"/>
        <end position="141"/>
    </location>
</feature>
<feature type="region of interest" description="G5" evidence="1">
    <location>
        <begin position="176"/>
        <end position="178"/>
    </location>
</feature>
<feature type="binding site" evidence="2">
    <location>
        <begin position="19"/>
        <end position="26"/>
    </location>
    <ligand>
        <name>GTP</name>
        <dbReference type="ChEBI" id="CHEBI:37565"/>
    </ligand>
</feature>
<feature type="binding site" evidence="2">
    <location>
        <position position="26"/>
    </location>
    <ligand>
        <name>Mg(2+)</name>
        <dbReference type="ChEBI" id="CHEBI:18420"/>
    </ligand>
</feature>
<feature type="binding site" evidence="2">
    <location>
        <begin position="83"/>
        <end position="87"/>
    </location>
    <ligand>
        <name>GTP</name>
        <dbReference type="ChEBI" id="CHEBI:37565"/>
    </ligand>
</feature>
<feature type="binding site" evidence="2">
    <location>
        <begin position="138"/>
        <end position="141"/>
    </location>
    <ligand>
        <name>GTP</name>
        <dbReference type="ChEBI" id="CHEBI:37565"/>
    </ligand>
</feature>
<organism>
    <name type="scientific">Kitasatospora aureofaciens</name>
    <name type="common">Streptomyces aureofaciens</name>
    <dbReference type="NCBI Taxonomy" id="1894"/>
    <lineage>
        <taxon>Bacteria</taxon>
        <taxon>Bacillati</taxon>
        <taxon>Actinomycetota</taxon>
        <taxon>Actinomycetes</taxon>
        <taxon>Kitasatosporales</taxon>
        <taxon>Streptomycetaceae</taxon>
        <taxon>Kitasatospora</taxon>
    </lineage>
</organism>
<sequence>MAKAKFERTKPHVNIGTIGHIDHGKTTLTAAITKVLHDKYPDLNAASAFDQIDKAPEERQRGITISIAHVEYQTEARHYAHVDCPGHADYIKNMITGAAQMDGAILVVAATDGPMPQTKEHVLLARQVGVPYIVVALNKADMVDDEEILELVELEVRELLSEYDFPGDDLPVVQVSALKALEGDKEWGDKLLGLMDAVDEAIPTPPRDTDKPFLMPVEDVFTITGRGTVVTGRIERGVLKVNETVDIIGIKTEKTTTTVTGIEMFRKLLDEGQAGENVGLLLRGIKREDVERGQVIIKPGSVTPHTEFEAAAYILSKDEGGRHTPFFNNYRPQFYFRTTDVTGVVTLPEGTEMVMPGDNTDMTVALIQPVAMEEGLKFAIREGGRTVGAGQVTKITK</sequence>
<dbReference type="EC" id="3.6.5.3" evidence="2"/>
<dbReference type="EMBL" id="AF007125">
    <property type="protein sequence ID" value="AAB62702.1"/>
    <property type="molecule type" value="Genomic_DNA"/>
</dbReference>
<dbReference type="SMR" id="O33594"/>
<dbReference type="STRING" id="1894.ADK78_20905"/>
<dbReference type="eggNOG" id="COG0050">
    <property type="taxonomic scope" value="Bacteria"/>
</dbReference>
<dbReference type="GO" id="GO:0005829">
    <property type="term" value="C:cytosol"/>
    <property type="evidence" value="ECO:0007669"/>
    <property type="project" value="TreeGrafter"/>
</dbReference>
<dbReference type="GO" id="GO:0005525">
    <property type="term" value="F:GTP binding"/>
    <property type="evidence" value="ECO:0007669"/>
    <property type="project" value="UniProtKB-UniRule"/>
</dbReference>
<dbReference type="GO" id="GO:0003924">
    <property type="term" value="F:GTPase activity"/>
    <property type="evidence" value="ECO:0007669"/>
    <property type="project" value="InterPro"/>
</dbReference>
<dbReference type="GO" id="GO:0003746">
    <property type="term" value="F:translation elongation factor activity"/>
    <property type="evidence" value="ECO:0007669"/>
    <property type="project" value="UniProtKB-UniRule"/>
</dbReference>
<dbReference type="CDD" id="cd01884">
    <property type="entry name" value="EF_Tu"/>
    <property type="match status" value="1"/>
</dbReference>
<dbReference type="CDD" id="cd03697">
    <property type="entry name" value="EFTU_II"/>
    <property type="match status" value="1"/>
</dbReference>
<dbReference type="CDD" id="cd03707">
    <property type="entry name" value="EFTU_III"/>
    <property type="match status" value="1"/>
</dbReference>
<dbReference type="FunFam" id="2.40.30.10:FF:000001">
    <property type="entry name" value="Elongation factor Tu"/>
    <property type="match status" value="1"/>
</dbReference>
<dbReference type="FunFam" id="3.40.50.300:FF:000003">
    <property type="entry name" value="Elongation factor Tu"/>
    <property type="match status" value="1"/>
</dbReference>
<dbReference type="Gene3D" id="3.40.50.300">
    <property type="entry name" value="P-loop containing nucleotide triphosphate hydrolases"/>
    <property type="match status" value="1"/>
</dbReference>
<dbReference type="Gene3D" id="2.40.30.10">
    <property type="entry name" value="Translation factors"/>
    <property type="match status" value="2"/>
</dbReference>
<dbReference type="HAMAP" id="MF_00118_B">
    <property type="entry name" value="EF_Tu_B"/>
    <property type="match status" value="1"/>
</dbReference>
<dbReference type="InterPro" id="IPR041709">
    <property type="entry name" value="EF-Tu_GTP-bd"/>
</dbReference>
<dbReference type="InterPro" id="IPR050055">
    <property type="entry name" value="EF-Tu_GTPase"/>
</dbReference>
<dbReference type="InterPro" id="IPR004161">
    <property type="entry name" value="EFTu-like_2"/>
</dbReference>
<dbReference type="InterPro" id="IPR033720">
    <property type="entry name" value="EFTU_2"/>
</dbReference>
<dbReference type="InterPro" id="IPR031157">
    <property type="entry name" value="G_TR_CS"/>
</dbReference>
<dbReference type="InterPro" id="IPR027417">
    <property type="entry name" value="P-loop_NTPase"/>
</dbReference>
<dbReference type="InterPro" id="IPR005225">
    <property type="entry name" value="Small_GTP-bd"/>
</dbReference>
<dbReference type="InterPro" id="IPR000795">
    <property type="entry name" value="T_Tr_GTP-bd_dom"/>
</dbReference>
<dbReference type="InterPro" id="IPR009000">
    <property type="entry name" value="Transl_B-barrel_sf"/>
</dbReference>
<dbReference type="InterPro" id="IPR009001">
    <property type="entry name" value="Transl_elong_EF1A/Init_IF2_C"/>
</dbReference>
<dbReference type="InterPro" id="IPR004541">
    <property type="entry name" value="Transl_elong_EFTu/EF1A_bac/org"/>
</dbReference>
<dbReference type="InterPro" id="IPR004160">
    <property type="entry name" value="Transl_elong_EFTu/EF1A_C"/>
</dbReference>
<dbReference type="NCBIfam" id="TIGR00485">
    <property type="entry name" value="EF-Tu"/>
    <property type="match status" value="1"/>
</dbReference>
<dbReference type="NCBIfam" id="NF000766">
    <property type="entry name" value="PRK00049.1"/>
    <property type="match status" value="1"/>
</dbReference>
<dbReference type="NCBIfam" id="NF009372">
    <property type="entry name" value="PRK12735.1"/>
    <property type="match status" value="1"/>
</dbReference>
<dbReference type="NCBIfam" id="NF009373">
    <property type="entry name" value="PRK12736.1"/>
    <property type="match status" value="1"/>
</dbReference>
<dbReference type="NCBIfam" id="TIGR00231">
    <property type="entry name" value="small_GTP"/>
    <property type="match status" value="1"/>
</dbReference>
<dbReference type="PANTHER" id="PTHR43721:SF22">
    <property type="entry name" value="ELONGATION FACTOR TU, MITOCHONDRIAL"/>
    <property type="match status" value="1"/>
</dbReference>
<dbReference type="PANTHER" id="PTHR43721">
    <property type="entry name" value="ELONGATION FACTOR TU-RELATED"/>
    <property type="match status" value="1"/>
</dbReference>
<dbReference type="Pfam" id="PF00009">
    <property type="entry name" value="GTP_EFTU"/>
    <property type="match status" value="1"/>
</dbReference>
<dbReference type="Pfam" id="PF03144">
    <property type="entry name" value="GTP_EFTU_D2"/>
    <property type="match status" value="1"/>
</dbReference>
<dbReference type="Pfam" id="PF03143">
    <property type="entry name" value="GTP_EFTU_D3"/>
    <property type="match status" value="1"/>
</dbReference>
<dbReference type="PRINTS" id="PR00315">
    <property type="entry name" value="ELONGATNFCT"/>
</dbReference>
<dbReference type="SUPFAM" id="SSF50465">
    <property type="entry name" value="EF-Tu/eEF-1alpha/eIF2-gamma C-terminal domain"/>
    <property type="match status" value="1"/>
</dbReference>
<dbReference type="SUPFAM" id="SSF52540">
    <property type="entry name" value="P-loop containing nucleoside triphosphate hydrolases"/>
    <property type="match status" value="1"/>
</dbReference>
<dbReference type="SUPFAM" id="SSF50447">
    <property type="entry name" value="Translation proteins"/>
    <property type="match status" value="1"/>
</dbReference>
<dbReference type="PROSITE" id="PS00301">
    <property type="entry name" value="G_TR_1"/>
    <property type="match status" value="1"/>
</dbReference>
<dbReference type="PROSITE" id="PS51722">
    <property type="entry name" value="G_TR_2"/>
    <property type="match status" value="1"/>
</dbReference>